<evidence type="ECO:0000250" key="1">
    <source>
        <dbReference type="UniProtKB" id="P0DTC9"/>
    </source>
</evidence>
<evidence type="ECO:0000255" key="2">
    <source>
        <dbReference type="HAMAP-Rule" id="MF_04096"/>
    </source>
</evidence>
<evidence type="ECO:0000255" key="3">
    <source>
        <dbReference type="PROSITE-ProRule" id="PRU01276"/>
    </source>
</evidence>
<evidence type="ECO:0000255" key="4">
    <source>
        <dbReference type="PROSITE-ProRule" id="PRU01277"/>
    </source>
</evidence>
<evidence type="ECO:0000256" key="5">
    <source>
        <dbReference type="SAM" id="MobiDB-lite"/>
    </source>
</evidence>
<comment type="function">
    <text evidence="2">Packages the positive strand viral genome RNA into a helical ribonucleocapsid (RNP) and plays a fundamental role during virion assembly through its interactions with the viral genome and membrane protein M. Plays an important role in enhancing the efficiency of subgenomic viral RNA transcription as well as viral replication.</text>
</comment>
<comment type="subunit">
    <text evidence="2">Homooligomer. Both monomeric and oligomeric forms interact with RNA. Interacts with protein M. Interacts with NSP3; this interaction serves to tether the genome to the newly translated replicase-transcriptase complex at a very early stage of infection.</text>
</comment>
<comment type="subcellular location">
    <subcellularLocation>
        <location evidence="2">Virion</location>
    </subcellularLocation>
    <subcellularLocation>
        <location evidence="2">Host endoplasmic reticulum-Golgi intermediate compartment</location>
    </subcellularLocation>
    <subcellularLocation>
        <location evidence="2">Host Golgi apparatus</location>
    </subcellularLocation>
    <text evidence="2">Located inside the virion, complexed with the viral RNA. Probably associates with ER-derived membranes where it participates in viral RNA synthesis and virus budding.</text>
</comment>
<comment type="PTM">
    <text evidence="2">ADP-ribosylated. The ADP-ribosylation is retained in the virion during infection.</text>
</comment>
<comment type="PTM">
    <text evidence="2">Phosphorylated on serine and threonine residues.</text>
</comment>
<comment type="similarity">
    <text evidence="2">Belongs to the betacoronavirus nucleocapsid protein family.</text>
</comment>
<protein>
    <recommendedName>
        <fullName evidence="2">Nucleoprotein</fullName>
    </recommendedName>
    <alternativeName>
        <fullName evidence="2">Nucleocapsid protein</fullName>
        <shortName evidence="2">NC</shortName>
        <shortName evidence="2">Protein N</shortName>
    </alternativeName>
</protein>
<feature type="chain" id="PRO_0000105993" description="Nucleoprotein">
    <location>
        <begin position="1"/>
        <end position="448"/>
    </location>
</feature>
<feature type="domain" description="CoV N NTD" evidence="3">
    <location>
        <begin position="61"/>
        <end position="190"/>
    </location>
</feature>
<feature type="domain" description="CoV N CTD" evidence="4">
    <location>
        <begin position="259"/>
        <end position="384"/>
    </location>
</feature>
<feature type="region of interest" description="Disordered" evidence="5">
    <location>
        <begin position="1"/>
        <end position="55"/>
    </location>
</feature>
<feature type="region of interest" description="RNA-binding" evidence="2">
    <location>
        <begin position="52"/>
        <end position="194"/>
    </location>
</feature>
<feature type="region of interest" description="Disordered" evidence="5">
    <location>
        <begin position="157"/>
        <end position="231"/>
    </location>
</feature>
<feature type="region of interest" description="Dimerization" evidence="2">
    <location>
        <begin position="266"/>
        <end position="384"/>
    </location>
</feature>
<feature type="region of interest" description="Disordered" evidence="5">
    <location>
        <begin position="266"/>
        <end position="298"/>
    </location>
</feature>
<feature type="region of interest" description="Disordered" evidence="5">
    <location>
        <begin position="385"/>
        <end position="448"/>
    </location>
</feature>
<feature type="compositionally biased region" description="Low complexity" evidence="5">
    <location>
        <begin position="9"/>
        <end position="22"/>
    </location>
</feature>
<feature type="compositionally biased region" description="Polar residues" evidence="5">
    <location>
        <begin position="29"/>
        <end position="38"/>
    </location>
</feature>
<feature type="compositionally biased region" description="Polar residues" evidence="5">
    <location>
        <begin position="45"/>
        <end position="55"/>
    </location>
</feature>
<feature type="compositionally biased region" description="Low complexity" evidence="5">
    <location>
        <begin position="193"/>
        <end position="214"/>
    </location>
</feature>
<feature type="compositionally biased region" description="Basic residues" evidence="5">
    <location>
        <begin position="266"/>
        <end position="276"/>
    </location>
</feature>
<feature type="compositionally biased region" description="Polar residues" evidence="5">
    <location>
        <begin position="399"/>
        <end position="409"/>
    </location>
</feature>
<feature type="compositionally biased region" description="Basic and acidic residues" evidence="5">
    <location>
        <begin position="422"/>
        <end position="439"/>
    </location>
</feature>
<feature type="binding site" evidence="1">
    <location>
        <position position="106"/>
    </location>
    <ligand>
        <name>RNA</name>
        <dbReference type="ChEBI" id="CHEBI:33697"/>
    </ligand>
</feature>
<feature type="binding site" evidence="1">
    <location>
        <position position="122"/>
    </location>
    <ligand>
        <name>RNA</name>
        <dbReference type="ChEBI" id="CHEBI:33697"/>
    </ligand>
</feature>
<feature type="binding site" evidence="1">
    <location>
        <position position="164"/>
    </location>
    <ligand>
        <name>RNA</name>
        <dbReference type="ChEBI" id="CHEBI:33697"/>
    </ligand>
</feature>
<feature type="modified residue" description="Phosphoserine; by host" evidence="2">
    <location>
        <position position="167"/>
    </location>
</feature>
<feature type="modified residue" description="Phosphothreonine; by host" evidence="2">
    <location>
        <position position="174"/>
    </location>
</feature>
<feature type="modified residue" description="Phosphoserine; by host" evidence="2">
    <location>
        <position position="191"/>
    </location>
</feature>
<feature type="modified residue" description="Phosphoserine; by host" evidence="2">
    <location>
        <position position="390"/>
    </location>
</feature>
<feature type="modified residue" description="Phosphoserine; by host" evidence="2">
    <location>
        <position position="423"/>
    </location>
</feature>
<feature type="modified residue" description="Phosphothreonine; by host" evidence="2">
    <location>
        <position position="427"/>
    </location>
</feature>
<dbReference type="EMBL" id="AF058942">
    <property type="protein sequence ID" value="AAF25505.1"/>
    <property type="molecule type" value="Genomic_RNA"/>
</dbReference>
<dbReference type="SMR" id="Q9QAR8"/>
<dbReference type="GO" id="GO:0044172">
    <property type="term" value="C:host cell endoplasmic reticulum-Golgi intermediate compartment"/>
    <property type="evidence" value="ECO:0007669"/>
    <property type="project" value="UniProtKB-SubCell"/>
</dbReference>
<dbReference type="GO" id="GO:0044177">
    <property type="term" value="C:host cell Golgi apparatus"/>
    <property type="evidence" value="ECO:0007669"/>
    <property type="project" value="UniProtKB-SubCell"/>
</dbReference>
<dbReference type="GO" id="GO:1990904">
    <property type="term" value="C:ribonucleoprotein complex"/>
    <property type="evidence" value="ECO:0007669"/>
    <property type="project" value="UniProtKB-KW"/>
</dbReference>
<dbReference type="GO" id="GO:0019013">
    <property type="term" value="C:viral nucleocapsid"/>
    <property type="evidence" value="ECO:0007669"/>
    <property type="project" value="UniProtKB-UniRule"/>
</dbReference>
<dbReference type="GO" id="GO:0003723">
    <property type="term" value="F:RNA binding"/>
    <property type="evidence" value="ECO:0007669"/>
    <property type="project" value="UniProtKB-UniRule"/>
</dbReference>
<dbReference type="CDD" id="cd21595">
    <property type="entry name" value="CoV_N-CTD"/>
    <property type="match status" value="1"/>
</dbReference>
<dbReference type="CDD" id="cd21554">
    <property type="entry name" value="CoV_N-NTD"/>
    <property type="match status" value="1"/>
</dbReference>
<dbReference type="HAMAP" id="MF_04096">
    <property type="entry name" value="BETA_CORONA_NCAP"/>
    <property type="match status" value="1"/>
</dbReference>
<dbReference type="InterPro" id="IPR044344">
    <property type="entry name" value="N_prot_C_CoV"/>
</dbReference>
<dbReference type="InterPro" id="IPR044345">
    <property type="entry name" value="N_prot_N_CoV"/>
</dbReference>
<dbReference type="InterPro" id="IPR043505">
    <property type="entry name" value="NCAP_bCoV"/>
</dbReference>
<dbReference type="InterPro" id="IPR001218">
    <property type="entry name" value="Nucleocap_CoV"/>
</dbReference>
<dbReference type="InterPro" id="IPR037179">
    <property type="entry name" value="Nucleocapsid_C"/>
</dbReference>
<dbReference type="InterPro" id="IPR037195">
    <property type="entry name" value="Nucleocapsid_N"/>
</dbReference>
<dbReference type="Pfam" id="PF00937">
    <property type="entry name" value="CoV_nucleocap"/>
    <property type="match status" value="1"/>
</dbReference>
<dbReference type="PIRSF" id="PIRSF003888">
    <property type="entry name" value="Corona_nucleocap"/>
    <property type="match status" value="1"/>
</dbReference>
<dbReference type="SUPFAM" id="SSF110304">
    <property type="entry name" value="Coronavirus RNA-binding domain"/>
    <property type="match status" value="1"/>
</dbReference>
<dbReference type="SUPFAM" id="SSF103068">
    <property type="entry name" value="Nucleocapsid protein dimerization domain"/>
    <property type="match status" value="1"/>
</dbReference>
<dbReference type="PROSITE" id="PS51929">
    <property type="entry name" value="COV_N_CTD"/>
    <property type="match status" value="1"/>
</dbReference>
<dbReference type="PROSITE" id="PS51928">
    <property type="entry name" value="COV_N_NTD"/>
    <property type="match status" value="1"/>
</dbReference>
<keyword id="KW-0013">ADP-ribosylation</keyword>
<keyword id="KW-1040">Host Golgi apparatus</keyword>
<keyword id="KW-0597">Phosphoprotein</keyword>
<keyword id="KW-0687">Ribonucleoprotein</keyword>
<keyword id="KW-0694">RNA-binding</keyword>
<keyword id="KW-0804">Transcription</keyword>
<keyword id="KW-0805">Transcription regulation</keyword>
<keyword id="KW-0543">Viral nucleoprotein</keyword>
<keyword id="KW-0946">Virion</keyword>
<gene>
    <name evidence="2" type="primary">N</name>
    <name type="ORF">7a</name>
</gene>
<sequence>MSFTPGKQSSSRASSGNRSGNGILKWADQSDQSRNVQTRGRRAQPKQTATSQQPSGGNVVPYYSWFSGITQFQKGKEFEFAEGQGVPIAPGVPATEAKGYWYRHNRRSFKTADGNQRQLLPRWYFYYLGTGPHAKDQYGTDIDGVFWVASNQADVNTPADILDRDPSSDEAIPTRFPPGTVLPQGYYIEGSGRSAPNSRSTSRASSRASSAGSRSRADSGNRTPTSGVTPDMADQIASLVLAKLGKDATKPQQVTKQTAKEIRQKILNKPRQKRSPNKQCTVQQCFGKRGPNQNFGGGEMLKLGTSDPQFPILAELAPTAGAFFFGSRLELAKVQNLSGNLDEPQKDVYELRYNGAIRFDSTLSGFETIMKVLNENLNAYQQQDGMMNMSPKPQRQRGQKNGQGENDNISVAAPKSRVQQNKSRELTAEDISLLKKMDEPYTEDTSEI</sequence>
<organism>
    <name type="scientific">Bovine coronavirus (strain LY-138)</name>
    <name type="common">BCoV</name>
    <name type="synonym">BCV</name>
    <dbReference type="NCBI Taxonomy" id="11131"/>
    <lineage>
        <taxon>Viruses</taxon>
        <taxon>Riboviria</taxon>
        <taxon>Orthornavirae</taxon>
        <taxon>Pisuviricota</taxon>
        <taxon>Pisoniviricetes</taxon>
        <taxon>Nidovirales</taxon>
        <taxon>Cornidovirineae</taxon>
        <taxon>Coronaviridae</taxon>
        <taxon>Orthocoronavirinae</taxon>
        <taxon>Betacoronavirus</taxon>
        <taxon>Embecovirus</taxon>
        <taxon>Betacoronavirus 1</taxon>
    </lineage>
</organism>
<proteinExistence type="inferred from homology"/>
<name>NCAP_CVBLY</name>
<reference key="1">
    <citation type="journal article" date="1998" name="Virus Genes">
        <title>Nucleotide and predicted amino acid sequences of all genes encoded by the 3' genomic portion (9.5 kb) of respiratory bovine coronaviruses and comparisons among respiratory and enteric coronaviruses.</title>
        <authorList>
            <person name="Chouljenko V.N."/>
            <person name="Kousoulas K.G."/>
            <person name="Lin X.Q."/>
            <person name="Storz J."/>
        </authorList>
    </citation>
    <scope>NUCLEOTIDE SEQUENCE [GENOMIC RNA]</scope>
</reference>
<organismHost>
    <name type="scientific">Bos taurus</name>
    <name type="common">Bovine</name>
    <dbReference type="NCBI Taxonomy" id="9913"/>
</organismHost>
<accession>Q9QAR8</accession>